<proteinExistence type="inferred from homology"/>
<name>NDK_HELAH</name>
<evidence type="ECO:0000255" key="1">
    <source>
        <dbReference type="HAMAP-Rule" id="MF_00451"/>
    </source>
</evidence>
<sequence>MKQRTLSIIKPDALKKKVVGKIIDRFESNGLEVIAMKRLHLSVKDAENFYAIHRERPFFKDLIEFMVSGPVVVMVLEGKDAVAKNRDLMGATDPKLAQKGTIRADFAESIDANAVHGSDSLENAHNEIAFFFATREF</sequence>
<protein>
    <recommendedName>
        <fullName evidence="1">Nucleoside diphosphate kinase</fullName>
        <shortName evidence="1">NDK</shortName>
        <shortName evidence="1">NDP kinase</shortName>
        <ecNumber evidence="1">2.7.4.6</ecNumber>
    </recommendedName>
    <alternativeName>
        <fullName evidence="1">Nucleoside-2-P kinase</fullName>
    </alternativeName>
</protein>
<comment type="function">
    <text evidence="1">Major role in the synthesis of nucleoside triphosphates other than ATP. The ATP gamma phosphate is transferred to the NDP beta phosphate via a ping-pong mechanism, using a phosphorylated active-site intermediate.</text>
</comment>
<comment type="catalytic activity">
    <reaction evidence="1">
        <text>a 2'-deoxyribonucleoside 5'-diphosphate + ATP = a 2'-deoxyribonucleoside 5'-triphosphate + ADP</text>
        <dbReference type="Rhea" id="RHEA:44640"/>
        <dbReference type="ChEBI" id="CHEBI:30616"/>
        <dbReference type="ChEBI" id="CHEBI:61560"/>
        <dbReference type="ChEBI" id="CHEBI:73316"/>
        <dbReference type="ChEBI" id="CHEBI:456216"/>
        <dbReference type="EC" id="2.7.4.6"/>
    </reaction>
</comment>
<comment type="catalytic activity">
    <reaction evidence="1">
        <text>a ribonucleoside 5'-diphosphate + ATP = a ribonucleoside 5'-triphosphate + ADP</text>
        <dbReference type="Rhea" id="RHEA:18113"/>
        <dbReference type="ChEBI" id="CHEBI:30616"/>
        <dbReference type="ChEBI" id="CHEBI:57930"/>
        <dbReference type="ChEBI" id="CHEBI:61557"/>
        <dbReference type="ChEBI" id="CHEBI:456216"/>
        <dbReference type="EC" id="2.7.4.6"/>
    </reaction>
</comment>
<comment type="cofactor">
    <cofactor evidence="1">
        <name>Mg(2+)</name>
        <dbReference type="ChEBI" id="CHEBI:18420"/>
    </cofactor>
</comment>
<comment type="subunit">
    <text evidence="1">Homotetramer.</text>
</comment>
<comment type="subcellular location">
    <subcellularLocation>
        <location evidence="1">Cytoplasm</location>
    </subcellularLocation>
</comment>
<comment type="similarity">
    <text evidence="1">Belongs to the NDK family.</text>
</comment>
<dbReference type="EC" id="2.7.4.6" evidence="1"/>
<dbReference type="EMBL" id="AM260522">
    <property type="protein sequence ID" value="CAJ99220.1"/>
    <property type="molecule type" value="Genomic_DNA"/>
</dbReference>
<dbReference type="RefSeq" id="WP_011577335.1">
    <property type="nucleotide sequence ID" value="NC_008229.1"/>
</dbReference>
<dbReference type="SMR" id="Q17YQ6"/>
<dbReference type="STRING" id="382638.Hac_0383"/>
<dbReference type="GeneID" id="31757891"/>
<dbReference type="KEGG" id="hac:Hac_0383"/>
<dbReference type="eggNOG" id="COG0105">
    <property type="taxonomic scope" value="Bacteria"/>
</dbReference>
<dbReference type="HOGENOM" id="CLU_060216_8_1_7"/>
<dbReference type="OrthoDB" id="9801161at2"/>
<dbReference type="BioCyc" id="HACI382638:HAC_RS01735-MONOMER"/>
<dbReference type="Proteomes" id="UP000000775">
    <property type="component" value="Chromosome"/>
</dbReference>
<dbReference type="GO" id="GO:0005737">
    <property type="term" value="C:cytoplasm"/>
    <property type="evidence" value="ECO:0007669"/>
    <property type="project" value="UniProtKB-SubCell"/>
</dbReference>
<dbReference type="GO" id="GO:0005524">
    <property type="term" value="F:ATP binding"/>
    <property type="evidence" value="ECO:0007669"/>
    <property type="project" value="UniProtKB-UniRule"/>
</dbReference>
<dbReference type="GO" id="GO:0046872">
    <property type="term" value="F:metal ion binding"/>
    <property type="evidence" value="ECO:0007669"/>
    <property type="project" value="UniProtKB-KW"/>
</dbReference>
<dbReference type="GO" id="GO:0004550">
    <property type="term" value="F:nucleoside diphosphate kinase activity"/>
    <property type="evidence" value="ECO:0007669"/>
    <property type="project" value="UniProtKB-UniRule"/>
</dbReference>
<dbReference type="GO" id="GO:0006241">
    <property type="term" value="P:CTP biosynthetic process"/>
    <property type="evidence" value="ECO:0007669"/>
    <property type="project" value="UniProtKB-UniRule"/>
</dbReference>
<dbReference type="GO" id="GO:0006183">
    <property type="term" value="P:GTP biosynthetic process"/>
    <property type="evidence" value="ECO:0007669"/>
    <property type="project" value="UniProtKB-UniRule"/>
</dbReference>
<dbReference type="GO" id="GO:0006228">
    <property type="term" value="P:UTP biosynthetic process"/>
    <property type="evidence" value="ECO:0007669"/>
    <property type="project" value="UniProtKB-UniRule"/>
</dbReference>
<dbReference type="CDD" id="cd04413">
    <property type="entry name" value="NDPk_I"/>
    <property type="match status" value="1"/>
</dbReference>
<dbReference type="FunFam" id="3.30.70.141:FF:000001">
    <property type="entry name" value="Nucleoside diphosphate kinase"/>
    <property type="match status" value="1"/>
</dbReference>
<dbReference type="Gene3D" id="3.30.70.141">
    <property type="entry name" value="Nucleoside diphosphate kinase-like domain"/>
    <property type="match status" value="1"/>
</dbReference>
<dbReference type="HAMAP" id="MF_00451">
    <property type="entry name" value="NDP_kinase"/>
    <property type="match status" value="1"/>
</dbReference>
<dbReference type="InterPro" id="IPR034907">
    <property type="entry name" value="NDK-like_dom"/>
</dbReference>
<dbReference type="InterPro" id="IPR036850">
    <property type="entry name" value="NDK-like_dom_sf"/>
</dbReference>
<dbReference type="InterPro" id="IPR001564">
    <property type="entry name" value="Nucleoside_diP_kinase"/>
</dbReference>
<dbReference type="InterPro" id="IPR023005">
    <property type="entry name" value="Nucleoside_diP_kinase_AS"/>
</dbReference>
<dbReference type="NCBIfam" id="NF001908">
    <property type="entry name" value="PRK00668.1"/>
    <property type="match status" value="1"/>
</dbReference>
<dbReference type="PANTHER" id="PTHR46161">
    <property type="entry name" value="NUCLEOSIDE DIPHOSPHATE KINASE"/>
    <property type="match status" value="1"/>
</dbReference>
<dbReference type="PANTHER" id="PTHR46161:SF3">
    <property type="entry name" value="NUCLEOSIDE DIPHOSPHATE KINASE DDB_G0292928-RELATED"/>
    <property type="match status" value="1"/>
</dbReference>
<dbReference type="Pfam" id="PF00334">
    <property type="entry name" value="NDK"/>
    <property type="match status" value="1"/>
</dbReference>
<dbReference type="PRINTS" id="PR01243">
    <property type="entry name" value="NUCDPKINASE"/>
</dbReference>
<dbReference type="SMART" id="SM00562">
    <property type="entry name" value="NDK"/>
    <property type="match status" value="1"/>
</dbReference>
<dbReference type="SUPFAM" id="SSF54919">
    <property type="entry name" value="Nucleoside diphosphate kinase, NDK"/>
    <property type="match status" value="1"/>
</dbReference>
<dbReference type="PROSITE" id="PS00469">
    <property type="entry name" value="NDPK"/>
    <property type="match status" value="1"/>
</dbReference>
<dbReference type="PROSITE" id="PS51374">
    <property type="entry name" value="NDPK_LIKE"/>
    <property type="match status" value="1"/>
</dbReference>
<organism>
    <name type="scientific">Helicobacter acinonychis (strain Sheeba)</name>
    <dbReference type="NCBI Taxonomy" id="382638"/>
    <lineage>
        <taxon>Bacteria</taxon>
        <taxon>Pseudomonadati</taxon>
        <taxon>Campylobacterota</taxon>
        <taxon>Epsilonproteobacteria</taxon>
        <taxon>Campylobacterales</taxon>
        <taxon>Helicobacteraceae</taxon>
        <taxon>Helicobacter</taxon>
    </lineage>
</organism>
<keyword id="KW-0067">ATP-binding</keyword>
<keyword id="KW-0963">Cytoplasm</keyword>
<keyword id="KW-0418">Kinase</keyword>
<keyword id="KW-0460">Magnesium</keyword>
<keyword id="KW-0479">Metal-binding</keyword>
<keyword id="KW-0546">Nucleotide metabolism</keyword>
<keyword id="KW-0547">Nucleotide-binding</keyword>
<keyword id="KW-0597">Phosphoprotein</keyword>
<keyword id="KW-0808">Transferase</keyword>
<reference key="1">
    <citation type="journal article" date="2006" name="PLoS Genet.">
        <title>Who ate whom? Adaptive Helicobacter genomic changes that accompanied a host jump from early humans to large felines.</title>
        <authorList>
            <person name="Eppinger M."/>
            <person name="Baar C."/>
            <person name="Linz B."/>
            <person name="Raddatz G."/>
            <person name="Lanz C."/>
            <person name="Keller H."/>
            <person name="Morelli G."/>
            <person name="Gressmann H."/>
            <person name="Achtman M."/>
            <person name="Schuster S.C."/>
        </authorList>
    </citation>
    <scope>NUCLEOTIDE SEQUENCE [LARGE SCALE GENOMIC DNA]</scope>
    <source>
        <strain>Sheeba</strain>
    </source>
</reference>
<feature type="chain" id="PRO_1000026239" description="Nucleoside diphosphate kinase">
    <location>
        <begin position="1"/>
        <end position="137"/>
    </location>
</feature>
<feature type="active site" description="Pros-phosphohistidine intermediate" evidence="1">
    <location>
        <position position="116"/>
    </location>
</feature>
<feature type="binding site" evidence="1">
    <location>
        <position position="10"/>
    </location>
    <ligand>
        <name>ATP</name>
        <dbReference type="ChEBI" id="CHEBI:30616"/>
    </ligand>
</feature>
<feature type="binding site" evidence="1">
    <location>
        <position position="58"/>
    </location>
    <ligand>
        <name>ATP</name>
        <dbReference type="ChEBI" id="CHEBI:30616"/>
    </ligand>
</feature>
<feature type="binding site" evidence="1">
    <location>
        <position position="86"/>
    </location>
    <ligand>
        <name>ATP</name>
        <dbReference type="ChEBI" id="CHEBI:30616"/>
    </ligand>
</feature>
<feature type="binding site" evidence="1">
    <location>
        <position position="92"/>
    </location>
    <ligand>
        <name>ATP</name>
        <dbReference type="ChEBI" id="CHEBI:30616"/>
    </ligand>
</feature>
<feature type="binding site" evidence="1">
    <location>
        <position position="103"/>
    </location>
    <ligand>
        <name>ATP</name>
        <dbReference type="ChEBI" id="CHEBI:30616"/>
    </ligand>
</feature>
<feature type="binding site" evidence="1">
    <location>
        <position position="113"/>
    </location>
    <ligand>
        <name>ATP</name>
        <dbReference type="ChEBI" id="CHEBI:30616"/>
    </ligand>
</feature>
<gene>
    <name evidence="1" type="primary">ndk</name>
    <name type="ordered locus">Hac_0383</name>
</gene>
<accession>Q17YQ6</accession>